<feature type="chain" id="PRO_0000130948" description="Small ribosomal subunit protein uS14A">
    <location>
        <begin position="1"/>
        <end position="89"/>
    </location>
</feature>
<feature type="region of interest" description="Disordered" evidence="2">
    <location>
        <begin position="34"/>
        <end position="54"/>
    </location>
</feature>
<proteinExistence type="inferred from homology"/>
<name>RS14_STRP6</name>
<sequence>MAKKSKIAKYQKQLQLIEQYADLRRDLKAKGDYESLRKLPRDSNPNRLKNRDKIDGRPHAYMRKFGVSRINFRDLAHKGQLPGVTKASW</sequence>
<evidence type="ECO:0000255" key="1">
    <source>
        <dbReference type="HAMAP-Rule" id="MF_00537"/>
    </source>
</evidence>
<evidence type="ECO:0000256" key="2">
    <source>
        <dbReference type="SAM" id="MobiDB-lite"/>
    </source>
</evidence>
<evidence type="ECO:0000305" key="3"/>
<accession>Q5XA27</accession>
<gene>
    <name evidence="1" type="primary">rpsN</name>
    <name type="synonym">rpsN2</name>
    <name type="ordered locus">M6_Spy1601</name>
</gene>
<organism>
    <name type="scientific">Streptococcus pyogenes serotype M6 (strain ATCC BAA-946 / MGAS10394)</name>
    <dbReference type="NCBI Taxonomy" id="286636"/>
    <lineage>
        <taxon>Bacteria</taxon>
        <taxon>Bacillati</taxon>
        <taxon>Bacillota</taxon>
        <taxon>Bacilli</taxon>
        <taxon>Lactobacillales</taxon>
        <taxon>Streptococcaceae</taxon>
        <taxon>Streptococcus</taxon>
    </lineage>
</organism>
<reference key="1">
    <citation type="journal article" date="2004" name="J. Infect. Dis.">
        <title>Progress toward characterization of the group A Streptococcus metagenome: complete genome sequence of a macrolide-resistant serotype M6 strain.</title>
        <authorList>
            <person name="Banks D.J."/>
            <person name="Porcella S.F."/>
            <person name="Barbian K.D."/>
            <person name="Beres S.B."/>
            <person name="Philips L.E."/>
            <person name="Voyich J.M."/>
            <person name="DeLeo F.R."/>
            <person name="Martin J.M."/>
            <person name="Somerville G.A."/>
            <person name="Musser J.M."/>
        </authorList>
    </citation>
    <scope>NUCLEOTIDE SEQUENCE [LARGE SCALE GENOMIC DNA]</scope>
    <source>
        <strain>ATCC BAA-946 / MGAS10394</strain>
    </source>
</reference>
<comment type="function">
    <text evidence="1">Binds 16S rRNA, required for the assembly of 30S particles and may also be responsible for determining the conformation of the 16S rRNA at the A site.</text>
</comment>
<comment type="subunit">
    <text evidence="1">Part of the 30S ribosomal subunit. Contacts proteins S3 and S10.</text>
</comment>
<comment type="similarity">
    <text evidence="1">Belongs to the universal ribosomal protein uS14 family.</text>
</comment>
<keyword id="KW-0687">Ribonucleoprotein</keyword>
<keyword id="KW-0689">Ribosomal protein</keyword>
<keyword id="KW-0694">RNA-binding</keyword>
<keyword id="KW-0699">rRNA-binding</keyword>
<dbReference type="EMBL" id="CP000003">
    <property type="protein sequence ID" value="AAT87736.1"/>
    <property type="molecule type" value="Genomic_DNA"/>
</dbReference>
<dbReference type="RefSeq" id="WP_002982921.1">
    <property type="nucleotide sequence ID" value="NC_006086.1"/>
</dbReference>
<dbReference type="SMR" id="Q5XA27"/>
<dbReference type="GeneID" id="69900252"/>
<dbReference type="KEGG" id="spa:M6_Spy1601"/>
<dbReference type="HOGENOM" id="CLU_139869_0_0_9"/>
<dbReference type="Proteomes" id="UP000001167">
    <property type="component" value="Chromosome"/>
</dbReference>
<dbReference type="GO" id="GO:0005737">
    <property type="term" value="C:cytoplasm"/>
    <property type="evidence" value="ECO:0007669"/>
    <property type="project" value="UniProtKB-ARBA"/>
</dbReference>
<dbReference type="GO" id="GO:0015935">
    <property type="term" value="C:small ribosomal subunit"/>
    <property type="evidence" value="ECO:0007669"/>
    <property type="project" value="TreeGrafter"/>
</dbReference>
<dbReference type="GO" id="GO:0019843">
    <property type="term" value="F:rRNA binding"/>
    <property type="evidence" value="ECO:0007669"/>
    <property type="project" value="UniProtKB-UniRule"/>
</dbReference>
<dbReference type="GO" id="GO:0003735">
    <property type="term" value="F:structural constituent of ribosome"/>
    <property type="evidence" value="ECO:0007669"/>
    <property type="project" value="InterPro"/>
</dbReference>
<dbReference type="GO" id="GO:0006412">
    <property type="term" value="P:translation"/>
    <property type="evidence" value="ECO:0007669"/>
    <property type="project" value="UniProtKB-UniRule"/>
</dbReference>
<dbReference type="Gene3D" id="4.10.830.10">
    <property type="entry name" value="30s Ribosomal Protein S14, Chain N"/>
    <property type="match status" value="1"/>
</dbReference>
<dbReference type="HAMAP" id="MF_00537">
    <property type="entry name" value="Ribosomal_uS14_1"/>
    <property type="match status" value="1"/>
</dbReference>
<dbReference type="InterPro" id="IPR001209">
    <property type="entry name" value="Ribosomal_uS14"/>
</dbReference>
<dbReference type="InterPro" id="IPR023036">
    <property type="entry name" value="Ribosomal_uS14_bac/plastid"/>
</dbReference>
<dbReference type="InterPro" id="IPR043140">
    <property type="entry name" value="Ribosomal_uS14_sf"/>
</dbReference>
<dbReference type="NCBIfam" id="NF006477">
    <property type="entry name" value="PRK08881.1"/>
    <property type="match status" value="1"/>
</dbReference>
<dbReference type="PANTHER" id="PTHR19836">
    <property type="entry name" value="30S RIBOSOMAL PROTEIN S14"/>
    <property type="match status" value="1"/>
</dbReference>
<dbReference type="PANTHER" id="PTHR19836:SF19">
    <property type="entry name" value="SMALL RIBOSOMAL SUBUNIT PROTEIN US14M"/>
    <property type="match status" value="1"/>
</dbReference>
<dbReference type="Pfam" id="PF00253">
    <property type="entry name" value="Ribosomal_S14"/>
    <property type="match status" value="1"/>
</dbReference>
<dbReference type="SUPFAM" id="SSF57716">
    <property type="entry name" value="Glucocorticoid receptor-like (DNA-binding domain)"/>
    <property type="match status" value="1"/>
</dbReference>
<protein>
    <recommendedName>
        <fullName evidence="1">Small ribosomal subunit protein uS14A</fullName>
    </recommendedName>
    <alternativeName>
        <fullName evidence="3">30S ribosomal protein S14</fullName>
    </alternativeName>
</protein>